<sequence length="190" mass="20539">MIGTLSGTVEEVVCSNRIILCVGGVGYLVQLPGRVLSGCQHGDHVRLYIETYVGRDGVSQLYGFANREEQNCMRMLIKVSGVNYKTAMAILDVLTPEQVFSAIVSEDRAALKVGGVGEKLISRIISELTPQVQKFELNRFAATTRTDSEAVAALLSLGYERTAALGALQKVGVCDSTEDAVRRALLELSK</sequence>
<protein>
    <recommendedName>
        <fullName evidence="1">Holliday junction branch migration complex subunit RuvA</fullName>
    </recommendedName>
</protein>
<keyword id="KW-0963">Cytoplasm</keyword>
<keyword id="KW-0227">DNA damage</keyword>
<keyword id="KW-0233">DNA recombination</keyword>
<keyword id="KW-0234">DNA repair</keyword>
<keyword id="KW-0238">DNA-binding</keyword>
<name>RUVA_ANAMM</name>
<reference key="1">
    <citation type="journal article" date="2005" name="Proc. Natl. Acad. Sci. U.S.A.">
        <title>Complete genome sequencing of Anaplasma marginale reveals that the surface is skewed to two superfamilies of outer membrane proteins.</title>
        <authorList>
            <person name="Brayton K.A."/>
            <person name="Kappmeyer L.S."/>
            <person name="Herndon D.R."/>
            <person name="Dark M.J."/>
            <person name="Tibbals D.L."/>
            <person name="Palmer G.H."/>
            <person name="McGuire T.C."/>
            <person name="Knowles D.P. Jr."/>
        </authorList>
    </citation>
    <scope>NUCLEOTIDE SEQUENCE [LARGE SCALE GENOMIC DNA]</scope>
    <source>
        <strain>St. Maries</strain>
    </source>
</reference>
<feature type="chain" id="PRO_1000195111" description="Holliday junction branch migration complex subunit RuvA">
    <location>
        <begin position="1"/>
        <end position="190"/>
    </location>
</feature>
<feature type="region of interest" description="Domain I" evidence="1">
    <location>
        <begin position="1"/>
        <end position="65"/>
    </location>
</feature>
<feature type="region of interest" description="Domain II" evidence="1">
    <location>
        <begin position="66"/>
        <end position="137"/>
    </location>
</feature>
<feature type="region of interest" description="Flexible linker" evidence="1">
    <location>
        <begin position="137"/>
        <end position="141"/>
    </location>
</feature>
<feature type="region of interest" description="Domain III" evidence="1">
    <location>
        <begin position="142"/>
        <end position="190"/>
    </location>
</feature>
<evidence type="ECO:0000255" key="1">
    <source>
        <dbReference type="HAMAP-Rule" id="MF_00031"/>
    </source>
</evidence>
<proteinExistence type="inferred from homology"/>
<dbReference type="EMBL" id="CP000030">
    <property type="protein sequence ID" value="AAV86309.1"/>
    <property type="molecule type" value="Genomic_DNA"/>
</dbReference>
<dbReference type="RefSeq" id="WP_010267102.1">
    <property type="nucleotide sequence ID" value="NZ_AFMU01000019.1"/>
</dbReference>
<dbReference type="SMR" id="Q5PBM0"/>
<dbReference type="GeneID" id="7398592"/>
<dbReference type="KEGG" id="ama:AM173"/>
<dbReference type="HOGENOM" id="CLU_087936_3_0_5"/>
<dbReference type="GO" id="GO:0005737">
    <property type="term" value="C:cytoplasm"/>
    <property type="evidence" value="ECO:0007669"/>
    <property type="project" value="UniProtKB-SubCell"/>
</dbReference>
<dbReference type="GO" id="GO:0009379">
    <property type="term" value="C:Holliday junction helicase complex"/>
    <property type="evidence" value="ECO:0007669"/>
    <property type="project" value="InterPro"/>
</dbReference>
<dbReference type="GO" id="GO:0048476">
    <property type="term" value="C:Holliday junction resolvase complex"/>
    <property type="evidence" value="ECO:0007669"/>
    <property type="project" value="UniProtKB-UniRule"/>
</dbReference>
<dbReference type="GO" id="GO:0005524">
    <property type="term" value="F:ATP binding"/>
    <property type="evidence" value="ECO:0007669"/>
    <property type="project" value="InterPro"/>
</dbReference>
<dbReference type="GO" id="GO:0000400">
    <property type="term" value="F:four-way junction DNA binding"/>
    <property type="evidence" value="ECO:0007669"/>
    <property type="project" value="UniProtKB-UniRule"/>
</dbReference>
<dbReference type="GO" id="GO:0009378">
    <property type="term" value="F:four-way junction helicase activity"/>
    <property type="evidence" value="ECO:0007669"/>
    <property type="project" value="InterPro"/>
</dbReference>
<dbReference type="GO" id="GO:0006310">
    <property type="term" value="P:DNA recombination"/>
    <property type="evidence" value="ECO:0007669"/>
    <property type="project" value="UniProtKB-UniRule"/>
</dbReference>
<dbReference type="GO" id="GO:0006281">
    <property type="term" value="P:DNA repair"/>
    <property type="evidence" value="ECO:0007669"/>
    <property type="project" value="UniProtKB-UniRule"/>
</dbReference>
<dbReference type="CDD" id="cd14332">
    <property type="entry name" value="UBA_RuvA_C"/>
    <property type="match status" value="1"/>
</dbReference>
<dbReference type="Gene3D" id="1.10.150.20">
    <property type="entry name" value="5' to 3' exonuclease, C-terminal subdomain"/>
    <property type="match status" value="1"/>
</dbReference>
<dbReference type="Gene3D" id="1.10.8.10">
    <property type="entry name" value="DNA helicase RuvA subunit, C-terminal domain"/>
    <property type="match status" value="1"/>
</dbReference>
<dbReference type="Gene3D" id="2.40.50.140">
    <property type="entry name" value="Nucleic acid-binding proteins"/>
    <property type="match status" value="1"/>
</dbReference>
<dbReference type="HAMAP" id="MF_00031">
    <property type="entry name" value="DNA_HJ_migration_RuvA"/>
    <property type="match status" value="1"/>
</dbReference>
<dbReference type="InterPro" id="IPR013849">
    <property type="entry name" value="DNA_helicase_Holl-junc_RuvA_I"/>
</dbReference>
<dbReference type="InterPro" id="IPR012340">
    <property type="entry name" value="NA-bd_OB-fold"/>
</dbReference>
<dbReference type="InterPro" id="IPR000085">
    <property type="entry name" value="RuvA"/>
</dbReference>
<dbReference type="InterPro" id="IPR010994">
    <property type="entry name" value="RuvA_2-like"/>
</dbReference>
<dbReference type="InterPro" id="IPR011114">
    <property type="entry name" value="RuvA_C"/>
</dbReference>
<dbReference type="InterPro" id="IPR036267">
    <property type="entry name" value="RuvA_C_sf"/>
</dbReference>
<dbReference type="NCBIfam" id="NF011194">
    <property type="entry name" value="PRK14600.1"/>
    <property type="match status" value="1"/>
</dbReference>
<dbReference type="NCBIfam" id="TIGR00084">
    <property type="entry name" value="ruvA"/>
    <property type="match status" value="1"/>
</dbReference>
<dbReference type="Pfam" id="PF14520">
    <property type="entry name" value="HHH_5"/>
    <property type="match status" value="1"/>
</dbReference>
<dbReference type="Pfam" id="PF07499">
    <property type="entry name" value="RuvA_C"/>
    <property type="match status" value="1"/>
</dbReference>
<dbReference type="Pfam" id="PF01330">
    <property type="entry name" value="RuvA_N"/>
    <property type="match status" value="1"/>
</dbReference>
<dbReference type="SUPFAM" id="SSF46929">
    <property type="entry name" value="DNA helicase RuvA subunit, C-terminal domain"/>
    <property type="match status" value="1"/>
</dbReference>
<dbReference type="SUPFAM" id="SSF50249">
    <property type="entry name" value="Nucleic acid-binding proteins"/>
    <property type="match status" value="1"/>
</dbReference>
<dbReference type="SUPFAM" id="SSF47781">
    <property type="entry name" value="RuvA domain 2-like"/>
    <property type="match status" value="1"/>
</dbReference>
<comment type="function">
    <text evidence="1">The RuvA-RuvB-RuvC complex processes Holliday junction (HJ) DNA during genetic recombination and DNA repair, while the RuvA-RuvB complex plays an important role in the rescue of blocked DNA replication forks via replication fork reversal (RFR). RuvA specifically binds to HJ cruciform DNA, conferring on it an open structure. The RuvB hexamer acts as an ATP-dependent pump, pulling dsDNA into and through the RuvAB complex. HJ branch migration allows RuvC to scan DNA until it finds its consensus sequence, where it cleaves and resolves the cruciform DNA.</text>
</comment>
<comment type="subunit">
    <text evidence="1">Homotetramer. Forms an RuvA(8)-RuvB(12)-Holliday junction (HJ) complex. HJ DNA is sandwiched between 2 RuvA tetramers; dsDNA enters through RuvA and exits via RuvB. An RuvB hexamer assembles on each DNA strand where it exits the tetramer. Each RuvB hexamer is contacted by two RuvA subunits (via domain III) on 2 adjacent RuvB subunits; this complex drives branch migration. In the full resolvosome a probable DNA-RuvA(4)-RuvB(12)-RuvC(2) complex forms which resolves the HJ.</text>
</comment>
<comment type="subcellular location">
    <subcellularLocation>
        <location evidence="1">Cytoplasm</location>
    </subcellularLocation>
</comment>
<comment type="domain">
    <text evidence="1">Has three domains with a flexible linker between the domains II and III and assumes an 'L' shape. Domain III is highly mobile and contacts RuvB.</text>
</comment>
<comment type="similarity">
    <text evidence="1">Belongs to the RuvA family.</text>
</comment>
<gene>
    <name evidence="1" type="primary">ruvA</name>
    <name type="ordered locus">AM173</name>
</gene>
<accession>Q5PBM0</accession>
<organism>
    <name type="scientific">Anaplasma marginale (strain St. Maries)</name>
    <dbReference type="NCBI Taxonomy" id="234826"/>
    <lineage>
        <taxon>Bacteria</taxon>
        <taxon>Pseudomonadati</taxon>
        <taxon>Pseudomonadota</taxon>
        <taxon>Alphaproteobacteria</taxon>
        <taxon>Rickettsiales</taxon>
        <taxon>Anaplasmataceae</taxon>
        <taxon>Anaplasma</taxon>
    </lineage>
</organism>